<proteinExistence type="inferred from homology"/>
<gene>
    <name evidence="2" type="primary">yajQ</name>
    <name type="ordered locus">Z0529</name>
    <name type="ordered locus">ECs0480</name>
</gene>
<organism>
    <name type="scientific">Escherichia coli O157:H7</name>
    <dbReference type="NCBI Taxonomy" id="83334"/>
    <lineage>
        <taxon>Bacteria</taxon>
        <taxon>Pseudomonadati</taxon>
        <taxon>Pseudomonadota</taxon>
        <taxon>Gammaproteobacteria</taxon>
        <taxon>Enterobacterales</taxon>
        <taxon>Enterobacteriaceae</taxon>
        <taxon>Escherichia</taxon>
    </lineage>
</organism>
<name>YAJQ_ECO57</name>
<protein>
    <recommendedName>
        <fullName evidence="2">Nucleotide-binding protein YajQ</fullName>
    </recommendedName>
</protein>
<reference key="1">
    <citation type="journal article" date="2001" name="Nature">
        <title>Genome sequence of enterohaemorrhagic Escherichia coli O157:H7.</title>
        <authorList>
            <person name="Perna N.T."/>
            <person name="Plunkett G. III"/>
            <person name="Burland V."/>
            <person name="Mau B."/>
            <person name="Glasner J.D."/>
            <person name="Rose D.J."/>
            <person name="Mayhew G.F."/>
            <person name="Evans P.S."/>
            <person name="Gregor J."/>
            <person name="Kirkpatrick H.A."/>
            <person name="Posfai G."/>
            <person name="Hackett J."/>
            <person name="Klink S."/>
            <person name="Boutin A."/>
            <person name="Shao Y."/>
            <person name="Miller L."/>
            <person name="Grotbeck E.J."/>
            <person name="Davis N.W."/>
            <person name="Lim A."/>
            <person name="Dimalanta E.T."/>
            <person name="Potamousis K."/>
            <person name="Apodaca J."/>
            <person name="Anantharaman T.S."/>
            <person name="Lin J."/>
            <person name="Yen G."/>
            <person name="Schwartz D.C."/>
            <person name="Welch R.A."/>
            <person name="Blattner F.R."/>
        </authorList>
    </citation>
    <scope>NUCLEOTIDE SEQUENCE [LARGE SCALE GENOMIC DNA]</scope>
    <source>
        <strain>O157:H7 / EDL933 / ATCC 700927 / EHEC</strain>
    </source>
</reference>
<reference key="2">
    <citation type="journal article" date="2001" name="DNA Res.">
        <title>Complete genome sequence of enterohemorrhagic Escherichia coli O157:H7 and genomic comparison with a laboratory strain K-12.</title>
        <authorList>
            <person name="Hayashi T."/>
            <person name="Makino K."/>
            <person name="Ohnishi M."/>
            <person name="Kurokawa K."/>
            <person name="Ishii K."/>
            <person name="Yokoyama K."/>
            <person name="Han C.-G."/>
            <person name="Ohtsubo E."/>
            <person name="Nakayama K."/>
            <person name="Murata T."/>
            <person name="Tanaka M."/>
            <person name="Tobe T."/>
            <person name="Iida T."/>
            <person name="Takami H."/>
            <person name="Honda T."/>
            <person name="Sasakawa C."/>
            <person name="Ogasawara N."/>
            <person name="Yasunaga T."/>
            <person name="Kuhara S."/>
            <person name="Shiba T."/>
            <person name="Hattori M."/>
            <person name="Shinagawa H."/>
        </authorList>
    </citation>
    <scope>NUCLEOTIDE SEQUENCE [LARGE SCALE GENOMIC DNA]</scope>
    <source>
        <strain>O157:H7 / Sakai / RIMD 0509952 / EHEC</strain>
    </source>
</reference>
<keyword id="KW-0547">Nucleotide-binding</keyword>
<keyword id="KW-1185">Reference proteome</keyword>
<evidence type="ECO:0000250" key="1">
    <source>
        <dbReference type="UniProtKB" id="P0A8E7"/>
    </source>
</evidence>
<evidence type="ECO:0000255" key="2">
    <source>
        <dbReference type="HAMAP-Rule" id="MF_00632"/>
    </source>
</evidence>
<evidence type="ECO:0000305" key="3"/>
<comment type="function">
    <text evidence="2">Nucleotide-binding protein.</text>
</comment>
<comment type="subunit">
    <text evidence="1">Monomer.</text>
</comment>
<comment type="similarity">
    <text evidence="2">Belongs to the YajQ family.</text>
</comment>
<comment type="sequence caution" evidence="3">
    <conflict type="erroneous initiation">
        <sequence resource="EMBL-CDS" id="AAG54776"/>
    </conflict>
    <text>Extended N-terminus.</text>
</comment>
<feature type="chain" id="PRO_0000106182" description="Nucleotide-binding protein YajQ">
    <location>
        <begin position="1"/>
        <end position="163"/>
    </location>
</feature>
<accession>P0A8E9</accession>
<accession>P77482</accession>
<dbReference type="EMBL" id="AE005174">
    <property type="protein sequence ID" value="AAG54776.1"/>
    <property type="status" value="ALT_INIT"/>
    <property type="molecule type" value="Genomic_DNA"/>
</dbReference>
<dbReference type="EMBL" id="BA000007">
    <property type="protein sequence ID" value="BAB33903.2"/>
    <property type="molecule type" value="Genomic_DNA"/>
</dbReference>
<dbReference type="PIR" id="D85539">
    <property type="entry name" value="D85539"/>
</dbReference>
<dbReference type="PIR" id="H90688">
    <property type="entry name" value="H90688"/>
</dbReference>
<dbReference type="RefSeq" id="NP_308507.2">
    <property type="nucleotide sequence ID" value="NC_002695.1"/>
</dbReference>
<dbReference type="RefSeq" id="WP_001138904.1">
    <property type="nucleotide sequence ID" value="NZ_VOAI01000005.1"/>
</dbReference>
<dbReference type="SMR" id="P0A8E9"/>
<dbReference type="STRING" id="155864.Z0529"/>
<dbReference type="GeneID" id="914582"/>
<dbReference type="GeneID" id="93777034"/>
<dbReference type="KEGG" id="ece:Z0529"/>
<dbReference type="KEGG" id="ecs:ECs_0480"/>
<dbReference type="PATRIC" id="fig|386585.9.peg.581"/>
<dbReference type="eggNOG" id="COG1666">
    <property type="taxonomic scope" value="Bacteria"/>
</dbReference>
<dbReference type="HOGENOM" id="CLU_099839_1_0_6"/>
<dbReference type="OMA" id="DFKGVGA"/>
<dbReference type="Proteomes" id="UP000000558">
    <property type="component" value="Chromosome"/>
</dbReference>
<dbReference type="Proteomes" id="UP000002519">
    <property type="component" value="Chromosome"/>
</dbReference>
<dbReference type="GO" id="GO:0005829">
    <property type="term" value="C:cytosol"/>
    <property type="evidence" value="ECO:0007669"/>
    <property type="project" value="TreeGrafter"/>
</dbReference>
<dbReference type="GO" id="GO:0000166">
    <property type="term" value="F:nucleotide binding"/>
    <property type="evidence" value="ECO:0007669"/>
    <property type="project" value="TreeGrafter"/>
</dbReference>
<dbReference type="CDD" id="cd11740">
    <property type="entry name" value="YajQ_like"/>
    <property type="match status" value="1"/>
</dbReference>
<dbReference type="FunFam" id="3.30.70.860:FF:000001">
    <property type="entry name" value="UPF0234 protein YajQ"/>
    <property type="match status" value="1"/>
</dbReference>
<dbReference type="FunFam" id="3.30.70.990:FF:000001">
    <property type="entry name" value="UPF0234 protein YajQ"/>
    <property type="match status" value="1"/>
</dbReference>
<dbReference type="Gene3D" id="3.30.70.860">
    <property type="match status" value="1"/>
</dbReference>
<dbReference type="Gene3D" id="3.30.70.990">
    <property type="entry name" value="YajQ-like, domain 2"/>
    <property type="match status" value="1"/>
</dbReference>
<dbReference type="HAMAP" id="MF_00632">
    <property type="entry name" value="YajQ"/>
    <property type="match status" value="1"/>
</dbReference>
<dbReference type="InterPro" id="IPR007551">
    <property type="entry name" value="DUF520"/>
</dbReference>
<dbReference type="InterPro" id="IPR035571">
    <property type="entry name" value="UPF0234-like_C"/>
</dbReference>
<dbReference type="InterPro" id="IPR035570">
    <property type="entry name" value="UPF0234_N"/>
</dbReference>
<dbReference type="InterPro" id="IPR036183">
    <property type="entry name" value="YajQ-like_sf"/>
</dbReference>
<dbReference type="NCBIfam" id="NF003819">
    <property type="entry name" value="PRK05412.1"/>
    <property type="match status" value="1"/>
</dbReference>
<dbReference type="PANTHER" id="PTHR30476">
    <property type="entry name" value="UPF0234 PROTEIN YAJQ"/>
    <property type="match status" value="1"/>
</dbReference>
<dbReference type="PANTHER" id="PTHR30476:SF0">
    <property type="entry name" value="UPF0234 PROTEIN YAJQ"/>
    <property type="match status" value="1"/>
</dbReference>
<dbReference type="Pfam" id="PF04461">
    <property type="entry name" value="DUF520"/>
    <property type="match status" value="1"/>
</dbReference>
<dbReference type="SUPFAM" id="SSF89963">
    <property type="entry name" value="YajQ-like"/>
    <property type="match status" value="2"/>
</dbReference>
<sequence length="163" mass="18344">MPSFDIVSEVDLQEARNAVDNASREVESRFDFRNVEASFELNDASKTIKVLSESDFQVNQLLDILRAKLLKRGIEGSSLDVPENIVHSGKTWFVEAKLKQGIESATQKKIVKMIKDSKLKVQAQIQGDEIRVTGKSRDDLQAVMAMVRGGDLGQPFQFKNFRD</sequence>